<feature type="chain" id="PRO_0000106665" description="Uncharacterized protein MJ0042">
    <location>
        <begin position="1"/>
        <end position="215"/>
    </location>
</feature>
<proteinExistence type="predicted"/>
<accession>Q60347</accession>
<organism>
    <name type="scientific">Methanocaldococcus jannaschii (strain ATCC 43067 / DSM 2661 / JAL-1 / JCM 10045 / NBRC 100440)</name>
    <name type="common">Methanococcus jannaschii</name>
    <dbReference type="NCBI Taxonomy" id="243232"/>
    <lineage>
        <taxon>Archaea</taxon>
        <taxon>Methanobacteriati</taxon>
        <taxon>Methanobacteriota</taxon>
        <taxon>Methanomada group</taxon>
        <taxon>Methanococci</taxon>
        <taxon>Methanococcales</taxon>
        <taxon>Methanocaldococcaceae</taxon>
        <taxon>Methanocaldococcus</taxon>
    </lineage>
</organism>
<keyword id="KW-1185">Reference proteome</keyword>
<sequence length="215" mass="24892">MNVKCPECGAWIYVVEEDSGGDAMEVKCPKCGTSIYVVKPMGEKMKNKRDKDFLDVKILEIEETKKTSPYKDTKSEDVLKALRVKANINGEIYEFRIWQIAKKPEYRGMVYVVKSVSHYCGSVKTKNFQVDEDNDIYVKQKFGIIEGVNKSKIKLPKERMEEIAEKLGFELKEGDEGLRLYLGEKYSENPPLSQRPELIEKLIKCWIAFWEPTMI</sequence>
<reference key="1">
    <citation type="journal article" date="1996" name="Science">
        <title>Complete genome sequence of the methanogenic archaeon, Methanococcus jannaschii.</title>
        <authorList>
            <person name="Bult C.J."/>
            <person name="White O."/>
            <person name="Olsen G.J."/>
            <person name="Zhou L."/>
            <person name="Fleischmann R.D."/>
            <person name="Sutton G.G."/>
            <person name="Blake J.A."/>
            <person name="FitzGerald L.M."/>
            <person name="Clayton R.A."/>
            <person name="Gocayne J.D."/>
            <person name="Kerlavage A.R."/>
            <person name="Dougherty B.A."/>
            <person name="Tomb J.-F."/>
            <person name="Adams M.D."/>
            <person name="Reich C.I."/>
            <person name="Overbeek R."/>
            <person name="Kirkness E.F."/>
            <person name="Weinstock K.G."/>
            <person name="Merrick J.M."/>
            <person name="Glodek A."/>
            <person name="Scott J.L."/>
            <person name="Geoghagen N.S.M."/>
            <person name="Weidman J.F."/>
            <person name="Fuhrmann J.L."/>
            <person name="Nguyen D."/>
            <person name="Utterback T.R."/>
            <person name="Kelley J.M."/>
            <person name="Peterson J.D."/>
            <person name="Sadow P.W."/>
            <person name="Hanna M.C."/>
            <person name="Cotton M.D."/>
            <person name="Roberts K.M."/>
            <person name="Hurst M.A."/>
            <person name="Kaine B.P."/>
            <person name="Borodovsky M."/>
            <person name="Klenk H.-P."/>
            <person name="Fraser C.M."/>
            <person name="Smith H.O."/>
            <person name="Woese C.R."/>
            <person name="Venter J.C."/>
        </authorList>
    </citation>
    <scope>NUCLEOTIDE SEQUENCE [LARGE SCALE GENOMIC DNA]</scope>
    <source>
        <strain>ATCC 43067 / DSM 2661 / JAL-1 / JCM 10045 / NBRC 100440</strain>
    </source>
</reference>
<dbReference type="EMBL" id="L77117">
    <property type="protein sequence ID" value="AAB98028.1"/>
    <property type="molecule type" value="Genomic_DNA"/>
</dbReference>
<dbReference type="PIR" id="B64305">
    <property type="entry name" value="B64305"/>
</dbReference>
<dbReference type="RefSeq" id="WP_010869533.1">
    <property type="nucleotide sequence ID" value="NC_000909.1"/>
</dbReference>
<dbReference type="STRING" id="243232.MJ_0042"/>
<dbReference type="PaxDb" id="243232-MJ_0042"/>
<dbReference type="EnsemblBacteria" id="AAB98028">
    <property type="protein sequence ID" value="AAB98028"/>
    <property type="gene ID" value="MJ_0042"/>
</dbReference>
<dbReference type="GeneID" id="1450880"/>
<dbReference type="KEGG" id="mja:MJ_0042"/>
<dbReference type="HOGENOM" id="CLU_1280805_0_0_2"/>
<dbReference type="InParanoid" id="Q60347"/>
<dbReference type="Proteomes" id="UP000000805">
    <property type="component" value="Chromosome"/>
</dbReference>
<dbReference type="Gene3D" id="2.20.28.160">
    <property type="match status" value="1"/>
</dbReference>
<dbReference type="InterPro" id="IPR011723">
    <property type="entry name" value="Znf/thioredoxin_put"/>
</dbReference>
<dbReference type="NCBIfam" id="TIGR02098">
    <property type="entry name" value="MJ0042_CXXC"/>
    <property type="match status" value="1"/>
</dbReference>
<name>Y042_METJA</name>
<protein>
    <recommendedName>
        <fullName>Uncharacterized protein MJ0042</fullName>
    </recommendedName>
</protein>
<gene>
    <name type="ordered locus">MJ0042</name>
</gene>